<reference evidence="4" key="1">
    <citation type="journal article" date="2009" name="BMC Genomics">
        <title>Comprehensive EST analysis of the symbiotic sea anemone, Anemonia viridis.</title>
        <authorList>
            <person name="Sabourault C."/>
            <person name="Ganot P."/>
            <person name="Deleury E."/>
            <person name="Allemand D."/>
            <person name="Furla P."/>
        </authorList>
    </citation>
    <scope>NUCLEOTIDE SEQUENCE [MRNA]</scope>
</reference>
<reference key="2">
    <citation type="journal article" date="2015" name="Mol. Biol. Evol.">
        <title>Evolution of an ancient venom: recognition of a novel family of cnidarian toxins and the common evolutionary origin of sodium and potassium neurotoxins in sea anemone.</title>
        <authorList>
            <person name="Jouiaei M."/>
            <person name="Sunagar K."/>
            <person name="Federman Gross A."/>
            <person name="Scheib H."/>
            <person name="Alewood P.F."/>
            <person name="Moran Y."/>
            <person name="Fry B.G."/>
        </authorList>
    </citation>
    <scope>NOMENCLATURE</scope>
</reference>
<comment type="subcellular location">
    <subcellularLocation>
        <location evidence="2">Secreted</location>
    </subcellularLocation>
    <subcellularLocation>
        <location evidence="2">Nematocyst</location>
    </subcellularLocation>
</comment>
<comment type="PTM">
    <text evidence="2">Contains 4 disulfide bonds.</text>
</comment>
<comment type="caution">
    <text evidence="2">Opinions are divided on whether Anemonia viridis (Forsskal, 1775) and Anemonia sulcata (Pennant, 1777) are separate species.</text>
</comment>
<protein>
    <recommendedName>
        <fullName evidence="1">Small cysteine-rich protein</fullName>
        <shortName evidence="2">Avir_SCRiP</shortName>
        <shortName evidence="1">SCRiP</shortName>
    </recommendedName>
</protein>
<keyword id="KW-0165">Cleavage on pair of basic residues</keyword>
<keyword id="KW-1015">Disulfide bond</keyword>
<keyword id="KW-0166">Nematocyst</keyword>
<keyword id="KW-0528">Neurotoxin</keyword>
<keyword id="KW-0964">Secreted</keyword>
<keyword id="KW-0732">Signal</keyword>
<keyword id="KW-0800">Toxin</keyword>
<feature type="signal peptide" evidence="2">
    <location>
        <begin position="1" status="less than"/>
        <end position="17"/>
    </location>
</feature>
<feature type="propeptide" id="PRO_0000434293" evidence="2">
    <location>
        <begin position="18"/>
        <end position="19"/>
    </location>
</feature>
<feature type="chain" id="PRO_0000434294" description="Small cysteine-rich protein" evidence="3">
    <location>
        <begin position="22"/>
        <end position="64"/>
    </location>
</feature>
<feature type="non-terminal residue">
    <location>
        <position position="1"/>
    </location>
</feature>
<organism>
    <name type="scientific">Anemonia viridis</name>
    <name type="common">Snakelocks anemone</name>
    <dbReference type="NCBI Taxonomy" id="51769"/>
    <lineage>
        <taxon>Eukaryota</taxon>
        <taxon>Metazoa</taxon>
        <taxon>Cnidaria</taxon>
        <taxon>Anthozoa</taxon>
        <taxon>Hexacorallia</taxon>
        <taxon>Actiniaria</taxon>
        <taxon>Actiniidae</taxon>
        <taxon>Anemonia</taxon>
    </lineage>
</organism>
<sequence length="64" mass="7209">FVCVQARQIDPEQILRTPEKRASCSSRGGICRSTSIGCPRRYHSCHLFHHCRSHGDSCCCPNYG</sequence>
<accession>P0DL61</accession>
<dbReference type="EMBL" id="FK725749">
    <property type="status" value="NOT_ANNOTATED_CDS"/>
    <property type="molecule type" value="mRNA"/>
</dbReference>
<dbReference type="SMR" id="P0DL61"/>
<dbReference type="GO" id="GO:0005576">
    <property type="term" value="C:extracellular region"/>
    <property type="evidence" value="ECO:0007669"/>
    <property type="project" value="UniProtKB-SubCell"/>
</dbReference>
<dbReference type="GO" id="GO:0042151">
    <property type="term" value="C:nematocyst"/>
    <property type="evidence" value="ECO:0007669"/>
    <property type="project" value="UniProtKB-SubCell"/>
</dbReference>
<dbReference type="GO" id="GO:0090729">
    <property type="term" value="F:toxin activity"/>
    <property type="evidence" value="ECO:0007669"/>
    <property type="project" value="UniProtKB-KW"/>
</dbReference>
<evidence type="ECO:0000303" key="1">
    <source>
    </source>
</evidence>
<evidence type="ECO:0000305" key="2"/>
<evidence type="ECO:0000305" key="3">
    <source>
    </source>
</evidence>
<evidence type="ECO:0000312" key="4">
    <source>
        <dbReference type="EMBL" id="FK725749"/>
    </source>
</evidence>
<name>SCR_ANEVI</name>
<proteinExistence type="evidence at transcript level"/>